<accession>P05319</accession>
<accession>D6W227</accession>
<name>RLA2_YEAST</name>
<reference key="1">
    <citation type="journal article" date="1988" name="Nucleic Acids Res.">
        <title>cDNA and deduced amino acid sequence of acidic ribosomal protein A2 from Saccharomyces cerevisiae.</title>
        <authorList>
            <person name="Mitsui K."/>
            <person name="Tsurugi K."/>
        </authorList>
    </citation>
    <scope>NUCLEOTIDE SEQUENCE [MRNA]</scope>
    <source>
        <strain>IFO 40028</strain>
    </source>
</reference>
<reference key="2">
    <citation type="journal article" date="1988" name="J. Biol. Chem.">
        <title>Independent genes coding for three acidic proteins of the large ribosomal subunit from Saccharomyces cerevisiae.</title>
        <authorList>
            <person name="Remacha M."/>
            <person name="Saenz-Robles M.T."/>
            <person name="Vilella M.D."/>
            <person name="Ballesta J.P.G."/>
        </authorList>
    </citation>
    <scope>NUCLEOTIDE SEQUENCE [GENOMIC DNA]</scope>
</reference>
<reference key="3">
    <citation type="journal article" date="1990" name="J. Bacteriol.">
        <title>A family of genes encode the multiple forms of the Saccharomyces cerevisiae ribosomal proteins equivalent to the Escherichia coli L12 protein and a single form of the L10-equivalent ribosomal protein.</title>
        <authorList>
            <person name="Newton C.H."/>
            <person name="Shimmin L.C."/>
            <person name="Yee J."/>
            <person name="Dennis P.P."/>
        </authorList>
    </citation>
    <scope>NUCLEOTIDE SEQUENCE [GENOMIC DNA]</scope>
    <source>
        <strain>SR26-12C</strain>
    </source>
</reference>
<reference key="4">
    <citation type="journal article" date="1997" name="Nature">
        <title>The nucleotide sequence of Saccharomyces cerevisiae chromosome XV.</title>
        <authorList>
            <person name="Dujon B."/>
            <person name="Albermann K."/>
            <person name="Aldea M."/>
            <person name="Alexandraki D."/>
            <person name="Ansorge W."/>
            <person name="Arino J."/>
            <person name="Benes V."/>
            <person name="Bohn C."/>
            <person name="Bolotin-Fukuhara M."/>
            <person name="Bordonne R."/>
            <person name="Boyer J."/>
            <person name="Camasses A."/>
            <person name="Casamayor A."/>
            <person name="Casas C."/>
            <person name="Cheret G."/>
            <person name="Cziepluch C."/>
            <person name="Daignan-Fornier B."/>
            <person name="Dang V.-D."/>
            <person name="de Haan M."/>
            <person name="Delius H."/>
            <person name="Durand P."/>
            <person name="Fairhead C."/>
            <person name="Feldmann H."/>
            <person name="Gaillon L."/>
            <person name="Galisson F."/>
            <person name="Gamo F.-J."/>
            <person name="Gancedo C."/>
            <person name="Goffeau A."/>
            <person name="Goulding S.E."/>
            <person name="Grivell L.A."/>
            <person name="Habbig B."/>
            <person name="Hand N.J."/>
            <person name="Hani J."/>
            <person name="Hattenhorst U."/>
            <person name="Hebling U."/>
            <person name="Hernando Y."/>
            <person name="Herrero E."/>
            <person name="Heumann K."/>
            <person name="Hiesel R."/>
            <person name="Hilger F."/>
            <person name="Hofmann B."/>
            <person name="Hollenberg C.P."/>
            <person name="Hughes B."/>
            <person name="Jauniaux J.-C."/>
            <person name="Kalogeropoulos A."/>
            <person name="Katsoulou C."/>
            <person name="Kordes E."/>
            <person name="Lafuente M.J."/>
            <person name="Landt O."/>
            <person name="Louis E.J."/>
            <person name="Maarse A.C."/>
            <person name="Madania A."/>
            <person name="Mannhaupt G."/>
            <person name="Marck C."/>
            <person name="Martin R.P."/>
            <person name="Mewes H.-W."/>
            <person name="Michaux G."/>
            <person name="Paces V."/>
            <person name="Parle-McDermott A.G."/>
            <person name="Pearson B.M."/>
            <person name="Perrin A."/>
            <person name="Pettersson B."/>
            <person name="Poch O."/>
            <person name="Pohl T.M."/>
            <person name="Poirey R."/>
            <person name="Portetelle D."/>
            <person name="Pujol A."/>
            <person name="Purnelle B."/>
            <person name="Ramezani Rad M."/>
            <person name="Rechmann S."/>
            <person name="Schwager C."/>
            <person name="Schweizer M."/>
            <person name="Sor F."/>
            <person name="Sterky F."/>
            <person name="Tarassov I.A."/>
            <person name="Teodoru C."/>
            <person name="Tettelin H."/>
            <person name="Thierry A."/>
            <person name="Tobiasch E."/>
            <person name="Tzermia M."/>
            <person name="Uhlen M."/>
            <person name="Unseld M."/>
            <person name="Valens M."/>
            <person name="Vandenbol M."/>
            <person name="Vetter I."/>
            <person name="Vlcek C."/>
            <person name="Voet M."/>
            <person name="Volckaert G."/>
            <person name="Voss H."/>
            <person name="Wambutt R."/>
            <person name="Wedler H."/>
            <person name="Wiemann S."/>
            <person name="Winsor B."/>
            <person name="Wolfe K.H."/>
            <person name="Zollner A."/>
            <person name="Zumstein E."/>
            <person name="Kleine K."/>
        </authorList>
    </citation>
    <scope>NUCLEOTIDE SEQUENCE [LARGE SCALE GENOMIC DNA]</scope>
    <source>
        <strain>ATCC 204508 / S288c</strain>
    </source>
</reference>
<reference key="5">
    <citation type="journal article" date="2014" name="G3 (Bethesda)">
        <title>The reference genome sequence of Saccharomyces cerevisiae: Then and now.</title>
        <authorList>
            <person name="Engel S.R."/>
            <person name="Dietrich F.S."/>
            <person name="Fisk D.G."/>
            <person name="Binkley G."/>
            <person name="Balakrishnan R."/>
            <person name="Costanzo M.C."/>
            <person name="Dwight S.S."/>
            <person name="Hitz B.C."/>
            <person name="Karra K."/>
            <person name="Nash R.S."/>
            <person name="Weng S."/>
            <person name="Wong E.D."/>
            <person name="Lloyd P."/>
            <person name="Skrzypek M.S."/>
            <person name="Miyasato S.R."/>
            <person name="Simison M."/>
            <person name="Cherry J.M."/>
        </authorList>
    </citation>
    <scope>GENOME REANNOTATION</scope>
    <source>
        <strain>ATCC 204508 / S288c</strain>
    </source>
</reference>
<reference key="6">
    <citation type="journal article" date="2007" name="Genome Res.">
        <title>Approaching a complete repository of sequence-verified protein-encoding clones for Saccharomyces cerevisiae.</title>
        <authorList>
            <person name="Hu Y."/>
            <person name="Rolfs A."/>
            <person name="Bhullar B."/>
            <person name="Murthy T.V.S."/>
            <person name="Zhu C."/>
            <person name="Berger M.F."/>
            <person name="Camargo A.A."/>
            <person name="Kelley F."/>
            <person name="McCarron S."/>
            <person name="Jepson D."/>
            <person name="Richardson A."/>
            <person name="Raphael J."/>
            <person name="Moreira D."/>
            <person name="Taycher E."/>
            <person name="Zuo D."/>
            <person name="Mohr S."/>
            <person name="Kane M.F."/>
            <person name="Williamson J."/>
            <person name="Simpson A.J.G."/>
            <person name="Bulyk M.L."/>
            <person name="Harlow E."/>
            <person name="Marsischky G."/>
            <person name="Kolodner R.D."/>
            <person name="LaBaer J."/>
        </authorList>
    </citation>
    <scope>NUCLEOTIDE SEQUENCE [GENOMIC DNA]</scope>
    <source>
        <strain>ATCC 204508 / S288c</strain>
    </source>
</reference>
<reference key="7">
    <citation type="journal article" date="1993" name="Biochemistry">
        <title>The acidic phosphoproteins from Saccharomyces cerevisiae ribosomes. NH2-terminal acetylation is a conserved difference between P1 and P2 proteins.</title>
        <authorList>
            <person name="Santos C."/>
            <person name="Ortiz-Reyes B."/>
            <person name="Naranda T."/>
            <person name="Remacha M."/>
            <person name="Ballesta J.P.G."/>
        </authorList>
    </citation>
    <scope>PROTEIN SEQUENCE OF 1-6</scope>
</reference>
<reference key="8">
    <citation type="journal article" date="1998" name="Yeast">
        <title>The list of cytoplasmic ribosomal proteins of Saccharomyces cerevisiae.</title>
        <authorList>
            <person name="Planta R.J."/>
            <person name="Mager W.H."/>
        </authorList>
    </citation>
    <scope>NOMENCLATURE</scope>
    <scope>SUBUNIT</scope>
</reference>
<reference key="9">
    <citation type="journal article" date="1999" name="FEMS Microbiol. Rev.">
        <title>Phosphorylation of the yeast ribosomal stalk. Functional effects and enzymes involved in the process.</title>
        <authorList>
            <person name="Ballesta J.P.G."/>
            <person name="Rodriguez-Gabriel M.A."/>
            <person name="Bou G."/>
            <person name="Briones E."/>
            <person name="Zambrano R."/>
            <person name="Remacha M."/>
        </authorList>
    </citation>
    <scope>ROLE OF PHOSPHORYLATION</scope>
</reference>
<reference key="10">
    <citation type="journal article" date="1999" name="J. Biol. Chem.">
        <title>The action of N-terminal acetyltransferases on yeast ribosomal proteins.</title>
        <authorList>
            <person name="Arnold R.J."/>
            <person name="Polevoda B."/>
            <person name="Reilly J.P."/>
            <person name="Sherman F."/>
        </authorList>
    </citation>
    <scope>ANALYSIS OF N-TERMINUS</scope>
</reference>
<reference key="11">
    <citation type="journal article" date="2001" name="J. Biol. Chem.">
        <title>Asymmetric interactions between the acidic P1 and P2 proteins in the Saccharomyces cerevisiae ribosomal stalk.</title>
        <authorList>
            <person name="Guarinos E."/>
            <person name="Remacha M."/>
            <person name="Ballesta J.P.G."/>
        </authorList>
    </citation>
    <scope>INTERACTION WITH RPP1B</scope>
</reference>
<reference key="12">
    <citation type="journal article" date="2003" name="Nature">
        <title>Global analysis of protein localization in budding yeast.</title>
        <authorList>
            <person name="Huh W.-K."/>
            <person name="Falvo J.V."/>
            <person name="Gerke L.C."/>
            <person name="Carroll A.S."/>
            <person name="Howson R.W."/>
            <person name="Weissman J.S."/>
            <person name="O'Shea E.K."/>
        </authorList>
    </citation>
    <scope>SUBCELLULAR LOCATION [LARGE SCALE ANALYSIS]</scope>
</reference>
<reference key="13">
    <citation type="journal article" date="2003" name="Nature">
        <title>Global analysis of protein expression in yeast.</title>
        <authorList>
            <person name="Ghaemmaghami S."/>
            <person name="Huh W.-K."/>
            <person name="Bower K."/>
            <person name="Howson R.W."/>
            <person name="Belle A."/>
            <person name="Dephoure N."/>
            <person name="O'Shea E.K."/>
            <person name="Weissman J.S."/>
        </authorList>
    </citation>
    <scope>LEVEL OF PROTEIN EXPRESSION [LARGE SCALE ANALYSIS]</scope>
</reference>
<reference key="14">
    <citation type="journal article" date="2006" name="Mol. Microbiol.">
        <title>Yeast ribosomal P0 protein has two separate binding sites for P1/P2 proteins.</title>
        <authorList>
            <person name="Krokowski D."/>
            <person name="Boguszewska A."/>
            <person name="Abramczyk D."/>
            <person name="Liljas A."/>
            <person name="Tchorzewski M."/>
            <person name="Grankowski N."/>
        </authorList>
    </citation>
    <scope>INTERACTION WITH RPP0 AND RPP1B</scope>
</reference>
<reference key="15">
    <citation type="journal article" date="2007" name="J. Proteome Res.">
        <title>Large-scale phosphorylation analysis of alpha-factor-arrested Saccharomyces cerevisiae.</title>
        <authorList>
            <person name="Li X."/>
            <person name="Gerber S.A."/>
            <person name="Rudner A.D."/>
            <person name="Beausoleil S.A."/>
            <person name="Haas W."/>
            <person name="Villen J."/>
            <person name="Elias J.E."/>
            <person name="Gygi S.P."/>
        </authorList>
    </citation>
    <scope>PHOSPHORYLATION [LARGE SCALE ANALYSIS] AT SER-96</scope>
    <scope>IDENTIFICATION BY MASS SPECTROMETRY [LARGE SCALE ANALYSIS]</scope>
    <source>
        <strain>ADR376</strain>
    </source>
</reference>
<reference key="16">
    <citation type="journal article" date="2008" name="Mol. Cell. Proteomics">
        <title>A multidimensional chromatography technology for in-depth phosphoproteome analysis.</title>
        <authorList>
            <person name="Albuquerque C.P."/>
            <person name="Smolka M.B."/>
            <person name="Payne S.H."/>
            <person name="Bafna V."/>
            <person name="Eng J."/>
            <person name="Zhou H."/>
        </authorList>
    </citation>
    <scope>PHOSPHORYLATION [LARGE SCALE ANALYSIS] AT THR-16; SER-49 AND SER-96</scope>
    <scope>IDENTIFICATION BY MASS SPECTROMETRY [LARGE SCALE ANALYSIS]</scope>
</reference>
<reference key="17">
    <citation type="journal article" date="2009" name="Science">
        <title>Global analysis of Cdk1 substrate phosphorylation sites provides insights into evolution.</title>
        <authorList>
            <person name="Holt L.J."/>
            <person name="Tuch B.B."/>
            <person name="Villen J."/>
            <person name="Johnson A.D."/>
            <person name="Gygi S.P."/>
            <person name="Morgan D.O."/>
        </authorList>
    </citation>
    <scope>PHOSPHORYLATION [LARGE SCALE ANALYSIS] AT SER-40; SER-43; SER-49 AND SER-96</scope>
    <scope>IDENTIFICATION BY MASS SPECTROMETRY [LARGE SCALE ANALYSIS]</scope>
</reference>
<reference key="18">
    <citation type="journal article" date="2011" name="Science">
        <title>The structure of the eukaryotic ribosome at 3.0 A resolution.</title>
        <authorList>
            <person name="Ben-Shem A."/>
            <person name="Garreau de Loubresse N."/>
            <person name="Melnikov S."/>
            <person name="Jenner L."/>
            <person name="Yusupova G."/>
            <person name="Yusupov M."/>
        </authorList>
    </citation>
    <scope>SUBUNIT</scope>
    <scope>SUBCELLULAR LOCATION</scope>
</reference>
<reference key="19">
    <citation type="journal article" date="2012" name="Proteomics">
        <title>Sites of ubiquitin attachment in Saccharomyces cerevisiae.</title>
        <authorList>
            <person name="Starita L.M."/>
            <person name="Lo R.S."/>
            <person name="Eng J.K."/>
            <person name="von Haller P.D."/>
            <person name="Fields S."/>
        </authorList>
    </citation>
    <scope>UBIQUITINATION [LARGE SCALE ANALYSIS] AT LYS-2 AND LYS-48</scope>
    <scope>IDENTIFICATION BY MASS SPECTROMETRY [LARGE SCALE ANALYSIS]</scope>
</reference>
<reference key="20">
    <citation type="journal article" date="2014" name="Curr. Opin. Struct. Biol.">
        <title>A new system for naming ribosomal proteins.</title>
        <authorList>
            <person name="Ban N."/>
            <person name="Beckmann R."/>
            <person name="Cate J.H.D."/>
            <person name="Dinman J.D."/>
            <person name="Dragon F."/>
            <person name="Ellis S.R."/>
            <person name="Lafontaine D.L.J."/>
            <person name="Lindahl L."/>
            <person name="Liljas A."/>
            <person name="Lipton J.M."/>
            <person name="McAlear M.A."/>
            <person name="Moore P.B."/>
            <person name="Noller H.F."/>
            <person name="Ortega J."/>
            <person name="Panse V.G."/>
            <person name="Ramakrishnan V."/>
            <person name="Spahn C.M.T."/>
            <person name="Steitz T.A."/>
            <person name="Tchorzewski M."/>
            <person name="Tollervey D."/>
            <person name="Warren A.J."/>
            <person name="Williamson J.R."/>
            <person name="Wilson D."/>
            <person name="Yonath A."/>
            <person name="Yusupov M."/>
        </authorList>
    </citation>
    <scope>NOMENCLATURE</scope>
</reference>
<evidence type="ECO:0000256" key="1">
    <source>
        <dbReference type="SAM" id="MobiDB-lite"/>
    </source>
</evidence>
<evidence type="ECO:0000269" key="2">
    <source>
    </source>
</evidence>
<evidence type="ECO:0000269" key="3">
    <source>
    </source>
</evidence>
<evidence type="ECO:0000269" key="4">
    <source>
    </source>
</evidence>
<evidence type="ECO:0000269" key="5">
    <source>
    </source>
</evidence>
<evidence type="ECO:0000269" key="6">
    <source>
    </source>
</evidence>
<evidence type="ECO:0000269" key="7">
    <source>
    </source>
</evidence>
<evidence type="ECO:0000303" key="8">
    <source>
    </source>
</evidence>
<evidence type="ECO:0000303" key="9">
    <source>
    </source>
</evidence>
<evidence type="ECO:0000305" key="10"/>
<evidence type="ECO:0000305" key="11">
    <source>
    </source>
</evidence>
<evidence type="ECO:0000305" key="12">
    <source>
    </source>
</evidence>
<evidence type="ECO:0000305" key="13">
    <source>
    </source>
</evidence>
<evidence type="ECO:0007744" key="14">
    <source>
    </source>
</evidence>
<evidence type="ECO:0007744" key="15">
    <source>
    </source>
</evidence>
<evidence type="ECO:0007744" key="16">
    <source>
    </source>
</evidence>
<evidence type="ECO:0007744" key="17">
    <source>
    </source>
</evidence>
<comment type="function">
    <text evidence="11">Component of the ribosome, a large ribonucleoprotein complex responsible for the synthesis of proteins in the cell. The small ribosomal subunit (SSU) binds messenger RNAs (mRNAs) and translates the encoded message by selecting cognate aminoacyl-transfer RNA (tRNA) molecules. The large subunit (LSU) contains the ribosomal catalytic site termed the peptidyl transferase center (PTC), which catalyzes the formation of peptide bonds, thereby polymerizing the amino acids delivered by tRNAs into a polypeptide chain. The nascent polypeptides leave the ribosome through a tunnel in the LSU and interact with protein factors that function in enzymatic processing, targeting, and the membrane insertion of nascent chains at the exit of the ribosomal tunnel.</text>
</comment>
<comment type="subunit">
    <text evidence="2 5 6 13">Component of the large ribosomal subunit (LSU). Mature yeast ribosomes consist of a small (40S) and a large (60S) subunit. The 40S small subunit contains 1 molecule of ribosomal RNA (18S rRNA) and 33 different proteins (encoded by 57 genes). The large 60S subunit contains 3 rRNA molecules (25S, 5.8S and 5S rRNA) and 46 different proteins (encoded by 81 genes) (PubMed:22096102, PubMed:9559554). The 5 acidic ribosomal P-proteins form the stalk structure of the 60S subunit. They are organized as a pentameric complex in which uL10/P0 interacts with 2 heterodimers, P1A-P2B and P1B-P2A (PubMed:11431471, PubMed:16573688).</text>
</comment>
<comment type="interaction">
    <interactant intactId="EBI-15456">
        <id>P05319</id>
    </interactant>
    <interactant intactId="EBI-15447">
        <id>P05317</id>
        <label>RPP0</label>
    </interactant>
    <organismsDiffer>false</organismsDiffer>
    <experiments>3</experiments>
</comment>
<comment type="interaction">
    <interactant intactId="EBI-15456">
        <id>P05319</id>
    </interactant>
    <interactant intactId="EBI-15460">
        <id>P10622</id>
        <label>RPP1B</label>
    </interactant>
    <organismsDiffer>false</organismsDiffer>
    <experiments>3</experiments>
</comment>
<comment type="interaction">
    <interactant intactId="EBI-15456">
        <id>P05319</id>
    </interactant>
    <interactant intactId="EBI-15464">
        <id>P02400</id>
        <label>RPP2B</label>
    </interactant>
    <organismsDiffer>false</organismsDiffer>
    <experiments>3</experiments>
</comment>
<comment type="subcellular location">
    <subcellularLocation>
        <location evidence="3 6">Cytoplasm</location>
    </subcellularLocation>
</comment>
<comment type="PTM">
    <text>Phosphorylation is not involved in the interaction of the acidic P proteins with the ribosome, however it is suggested to affect the ribosome activity and to participate in a possible ribosome regulatory mechanism.</text>
</comment>
<comment type="PTM">
    <text evidence="7">The N-terminus is not modified.</text>
</comment>
<comment type="miscellaneous">
    <text evidence="12">The 4 small acidic ribosomal P-proteins from yeast can be classified into two couples of similar but not identical sequences. Each couple (P1A/P1B and P2A/P2B) is distinctly related to one of the two acidic ribosomal P-proteins P1/P2 present in multicellular organisms.</text>
</comment>
<comment type="miscellaneous">
    <text evidence="4">Present with 428000 molecules/cell in log phase SD medium.</text>
</comment>
<comment type="similarity">
    <text evidence="10">Belongs to the eukaryotic ribosomal protein P1/P2 family.</text>
</comment>
<gene>
    <name evidence="9" type="primary">RPP2A</name>
    <name type="synonym">L12EIB</name>
    <name type="synonym">RPA2</name>
    <name type="synonym">RPL44</name>
    <name type="synonym">RPLA2</name>
    <name type="ordered locus">YOL039W</name>
</gene>
<protein>
    <recommendedName>
        <fullName evidence="8">Large ribosomal subunit protein P2A</fullName>
        <shortName>P2A</shortName>
    </recommendedName>
    <alternativeName>
        <fullName evidence="9">60S acidic ribosomal protein P2-alpha</fullName>
        <shortName>A2</shortName>
    </alternativeName>
    <alternativeName>
        <fullName>L12eIB</fullName>
    </alternativeName>
    <alternativeName>
        <fullName>L44</fullName>
    </alternativeName>
    <alternativeName>
        <fullName>YP2alpha</fullName>
    </alternativeName>
</protein>
<dbReference type="EMBL" id="X06958">
    <property type="protein sequence ID" value="CAA30028.1"/>
    <property type="molecule type" value="mRNA"/>
</dbReference>
<dbReference type="EMBL" id="J03760">
    <property type="protein sequence ID" value="AAA34971.1"/>
    <property type="molecule type" value="Genomic_DNA"/>
</dbReference>
<dbReference type="EMBL" id="M26503">
    <property type="protein sequence ID" value="AAA34735.1"/>
    <property type="molecule type" value="Genomic_DNA"/>
</dbReference>
<dbReference type="EMBL" id="Z74781">
    <property type="protein sequence ID" value="CAA99041.1"/>
    <property type="molecule type" value="Genomic_DNA"/>
</dbReference>
<dbReference type="EMBL" id="AY692793">
    <property type="protein sequence ID" value="AAT92812.1"/>
    <property type="molecule type" value="Genomic_DNA"/>
</dbReference>
<dbReference type="EMBL" id="BK006948">
    <property type="protein sequence ID" value="DAA10743.1"/>
    <property type="molecule type" value="Genomic_DNA"/>
</dbReference>
<dbReference type="PIR" id="B28104">
    <property type="entry name" value="R5BYIB"/>
</dbReference>
<dbReference type="RefSeq" id="NP_014603.1">
    <property type="nucleotide sequence ID" value="NM_001183293.1"/>
</dbReference>
<dbReference type="PDB" id="4V6I">
    <property type="method" value="EM"/>
    <property type="resolution" value="8.80 A"/>
    <property type="chains" value="Bv/Bw=1-106"/>
</dbReference>
<dbReference type="PDBsum" id="4V6I"/>
<dbReference type="SMR" id="P05319"/>
<dbReference type="BioGRID" id="34363">
    <property type="interactions" value="237"/>
</dbReference>
<dbReference type="ComplexPortal" id="CPX-1601">
    <property type="entry name" value="60S cytosolic large ribosomal subunit"/>
</dbReference>
<dbReference type="DIP" id="DIP-2506N"/>
<dbReference type="FunCoup" id="P05319">
    <property type="interactions" value="963"/>
</dbReference>
<dbReference type="IntAct" id="P05319">
    <property type="interactions" value="93"/>
</dbReference>
<dbReference type="MINT" id="P05319"/>
<dbReference type="STRING" id="4932.YOL039W"/>
<dbReference type="Allergome" id="9537">
    <property type="allergen name" value="Sac c P2"/>
</dbReference>
<dbReference type="iPTMnet" id="P05319"/>
<dbReference type="PaxDb" id="4932-YOL039W"/>
<dbReference type="PeptideAtlas" id="P05319"/>
<dbReference type="TopDownProteomics" id="P05319"/>
<dbReference type="EnsemblFungi" id="YOL039W_mRNA">
    <property type="protein sequence ID" value="YOL039W"/>
    <property type="gene ID" value="YOL039W"/>
</dbReference>
<dbReference type="GeneID" id="854118"/>
<dbReference type="KEGG" id="sce:YOL039W"/>
<dbReference type="AGR" id="SGD:S000005399"/>
<dbReference type="SGD" id="S000005399">
    <property type="gene designation" value="RPP2A"/>
</dbReference>
<dbReference type="VEuPathDB" id="FungiDB:YOL039W"/>
<dbReference type="eggNOG" id="KOG3449">
    <property type="taxonomic scope" value="Eukaryota"/>
</dbReference>
<dbReference type="GeneTree" id="ENSGT00940000176747"/>
<dbReference type="HOGENOM" id="CLU_114656_0_1_1"/>
<dbReference type="InParanoid" id="P05319"/>
<dbReference type="OMA" id="ICKAVHI"/>
<dbReference type="OrthoDB" id="1227494at2759"/>
<dbReference type="BioCyc" id="YEAST:G3O-33453-MONOMER"/>
<dbReference type="Reactome" id="R-SCE-156827">
    <property type="pathway name" value="L13a-mediated translational silencing of Ceruloplasmin expression"/>
</dbReference>
<dbReference type="Reactome" id="R-SCE-1799339">
    <property type="pathway name" value="SRP-dependent cotranslational protein targeting to membrane"/>
</dbReference>
<dbReference type="Reactome" id="R-SCE-72689">
    <property type="pathway name" value="Formation of a pool of free 40S subunits"/>
</dbReference>
<dbReference type="Reactome" id="R-SCE-72706">
    <property type="pathway name" value="GTP hydrolysis and joining of the 60S ribosomal subunit"/>
</dbReference>
<dbReference type="Reactome" id="R-SCE-975956">
    <property type="pathway name" value="Nonsense Mediated Decay (NMD) independent of the Exon Junction Complex (EJC)"/>
</dbReference>
<dbReference type="Reactome" id="R-SCE-975957">
    <property type="pathway name" value="Nonsense Mediated Decay (NMD) enhanced by the Exon Junction Complex (EJC)"/>
</dbReference>
<dbReference type="BioGRID-ORCS" id="854118">
    <property type="hits" value="6 hits in 10 CRISPR screens"/>
</dbReference>
<dbReference type="PRO" id="PR:P05319"/>
<dbReference type="Proteomes" id="UP000002311">
    <property type="component" value="Chromosome XV"/>
</dbReference>
<dbReference type="RNAct" id="P05319">
    <property type="molecule type" value="protein"/>
</dbReference>
<dbReference type="GO" id="GO:0022625">
    <property type="term" value="C:cytosolic large ribosomal subunit"/>
    <property type="evidence" value="ECO:0000314"/>
    <property type="project" value="SGD"/>
</dbReference>
<dbReference type="GO" id="GO:0030295">
    <property type="term" value="F:protein kinase activator activity"/>
    <property type="evidence" value="ECO:0000250"/>
    <property type="project" value="SGD"/>
</dbReference>
<dbReference type="GO" id="GO:0003735">
    <property type="term" value="F:structural constituent of ribosome"/>
    <property type="evidence" value="ECO:0000314"/>
    <property type="project" value="SGD"/>
</dbReference>
<dbReference type="GO" id="GO:0002181">
    <property type="term" value="P:cytoplasmic translation"/>
    <property type="evidence" value="ECO:0000315"/>
    <property type="project" value="SGD"/>
</dbReference>
<dbReference type="GO" id="GO:0002182">
    <property type="term" value="P:cytoplasmic translational elongation"/>
    <property type="evidence" value="ECO:0007669"/>
    <property type="project" value="InterPro"/>
</dbReference>
<dbReference type="CDD" id="cd05833">
    <property type="entry name" value="Ribosomal_P2"/>
    <property type="match status" value="1"/>
</dbReference>
<dbReference type="FunFam" id="1.10.10.1410:FF:000002">
    <property type="entry name" value="60S acidic ribosomal protein P2"/>
    <property type="match status" value="1"/>
</dbReference>
<dbReference type="Gene3D" id="1.10.10.1410">
    <property type="match status" value="1"/>
</dbReference>
<dbReference type="HAMAP" id="MF_01478">
    <property type="entry name" value="Ribosomal_L12_arch"/>
    <property type="match status" value="1"/>
</dbReference>
<dbReference type="InterPro" id="IPR038716">
    <property type="entry name" value="P1/P2_N_sf"/>
</dbReference>
<dbReference type="InterPro" id="IPR027534">
    <property type="entry name" value="Ribosomal_P1/P2"/>
</dbReference>
<dbReference type="InterPro" id="IPR044076">
    <property type="entry name" value="Ribosomal_P2"/>
</dbReference>
<dbReference type="PANTHER" id="PTHR21141">
    <property type="entry name" value="60S ACIDIC RIBOSOMAL PROTEIN FAMILY MEMBER"/>
    <property type="match status" value="1"/>
</dbReference>
<dbReference type="PANTHER" id="PTHR21141:SF103">
    <property type="entry name" value="LARGE RIBOSOMAL SUBUNIT PROTEIN P2A"/>
    <property type="match status" value="1"/>
</dbReference>
<dbReference type="Pfam" id="PF00428">
    <property type="entry name" value="Ribosomal_60s"/>
    <property type="match status" value="1"/>
</dbReference>
<feature type="chain" id="PRO_0000157681" description="Large ribosomal subunit protein P2A">
    <location>
        <begin position="1"/>
        <end position="106"/>
    </location>
</feature>
<feature type="region of interest" description="Disordered" evidence="1">
    <location>
        <begin position="65"/>
        <end position="106"/>
    </location>
</feature>
<feature type="compositionally biased region" description="Low complexity" evidence="1">
    <location>
        <begin position="65"/>
        <end position="82"/>
    </location>
</feature>
<feature type="compositionally biased region" description="Acidic residues" evidence="1">
    <location>
        <begin position="83"/>
        <end position="100"/>
    </location>
</feature>
<feature type="modified residue" description="Phosphothreonine" evidence="15">
    <location>
        <position position="16"/>
    </location>
</feature>
<feature type="modified residue" description="Phosphoserine" evidence="16">
    <location>
        <position position="40"/>
    </location>
</feature>
<feature type="modified residue" description="Phosphoserine" evidence="16">
    <location>
        <position position="43"/>
    </location>
</feature>
<feature type="modified residue" description="Phosphoserine" evidence="15 16">
    <location>
        <position position="49"/>
    </location>
</feature>
<feature type="modified residue" description="Phosphoserine" evidence="14 15 16">
    <location>
        <position position="96"/>
    </location>
</feature>
<feature type="cross-link" description="Glycyl lysine isopeptide (Lys-Gly) (interchain with G-Cter in ubiquitin)" evidence="17">
    <location>
        <position position="2"/>
    </location>
</feature>
<feature type="cross-link" description="Glycyl lysine isopeptide (Lys-Gly) (interchain with G-Cter in ubiquitin)" evidence="17">
    <location>
        <position position="48"/>
    </location>
</feature>
<organism>
    <name type="scientific">Saccharomyces cerevisiae (strain ATCC 204508 / S288c)</name>
    <name type="common">Baker's yeast</name>
    <dbReference type="NCBI Taxonomy" id="559292"/>
    <lineage>
        <taxon>Eukaryota</taxon>
        <taxon>Fungi</taxon>
        <taxon>Dikarya</taxon>
        <taxon>Ascomycota</taxon>
        <taxon>Saccharomycotina</taxon>
        <taxon>Saccharomycetes</taxon>
        <taxon>Saccharomycetales</taxon>
        <taxon>Saccharomycetaceae</taxon>
        <taxon>Saccharomyces</taxon>
    </lineage>
</organism>
<keyword id="KW-0002">3D-structure</keyword>
<keyword id="KW-0963">Cytoplasm</keyword>
<keyword id="KW-0903">Direct protein sequencing</keyword>
<keyword id="KW-1017">Isopeptide bond</keyword>
<keyword id="KW-0597">Phosphoprotein</keyword>
<keyword id="KW-1185">Reference proteome</keyword>
<keyword id="KW-0687">Ribonucleoprotein</keyword>
<keyword id="KW-0689">Ribosomal protein</keyword>
<keyword id="KW-0832">Ubl conjugation</keyword>
<sequence>MKYLAAYLLLNAAGNTPDATKIKAILESVGIEIEDEKVSSVLSALEGKSVDELITEGNEKLAAVPAAGPASAGGAAAASGDAAAEEEKEEEAAEESDDDMGFGLFD</sequence>
<proteinExistence type="evidence at protein level"/>